<evidence type="ECO:0000250" key="1">
    <source>
        <dbReference type="UniProtKB" id="A2R2S8"/>
    </source>
</evidence>
<evidence type="ECO:0000250" key="2">
    <source>
        <dbReference type="UniProtKB" id="D4AV66"/>
    </source>
</evidence>
<evidence type="ECO:0000250" key="3">
    <source>
        <dbReference type="UniProtKB" id="Q5ATP7"/>
    </source>
</evidence>
<evidence type="ECO:0000255" key="4"/>
<evidence type="ECO:0000255" key="5">
    <source>
        <dbReference type="PROSITE-ProRule" id="PRU00498"/>
    </source>
</evidence>
<evidence type="ECO:0000269" key="6">
    <source>
    </source>
</evidence>
<evidence type="ECO:0000269" key="7">
    <source>
    </source>
</evidence>
<evidence type="ECO:0000303" key="8">
    <source>
    </source>
</evidence>
<evidence type="ECO:0000305" key="9"/>
<evidence type="ECO:0000312" key="10">
    <source>
        <dbReference type="EMBL" id="CAM54066.1"/>
    </source>
</evidence>
<keyword id="KW-0020">Allergen</keyword>
<keyword id="KW-0134">Cell wall</keyword>
<keyword id="KW-0325">Glycoprotein</keyword>
<keyword id="KW-0964">Secreted</keyword>
<keyword id="KW-0732">Signal</keyword>
<keyword id="KW-0749">Sporulation</keyword>
<reference key="1">
    <citation type="journal article" date="2009" name="Allergy">
        <title>Molecular and immunological characterization of Asp f 34, a novel major cell wall allergen of Aspergillus fumigatus.</title>
        <authorList>
            <person name="Glaser A.G."/>
            <person name="Kirsch A.I."/>
            <person name="Zeller S."/>
            <person name="Menz G."/>
            <person name="Rhyner C."/>
            <person name="Crameri R."/>
        </authorList>
    </citation>
    <scope>NUCLEOTIDE SEQUENCE [MRNA]</scope>
    <scope>ALLERGEN</scope>
    <scope>IGE-BINDING</scope>
    <source>
        <strain>ATCC 42202 / AF-102 / Ag 507</strain>
    </source>
</reference>
<reference key="2">
    <citation type="journal article" date="2011" name="Fungal Biol.">
        <title>The allergenicity of Aspergillus fumigatus conidia is influenced by growth temperature.</title>
        <authorList>
            <person name="Low S.Y."/>
            <person name="Dannemiller K."/>
            <person name="Yao M."/>
            <person name="Yamamoto N."/>
            <person name="Peccia J."/>
        </authorList>
    </citation>
    <scope>ALLERGEN</scope>
    <scope>INDUCTION</scope>
    <source>
        <strain>ATCC 34506</strain>
    </source>
</reference>
<feature type="signal peptide" evidence="4">
    <location>
        <begin position="1"/>
        <end position="18"/>
    </location>
</feature>
<feature type="chain" id="PRO_0000434417" description="Cell wall protein phiA" evidence="4">
    <location>
        <begin position="19"/>
        <end position="185"/>
    </location>
</feature>
<feature type="glycosylation site" description="N-linked (GlcNAc...) asparagine" evidence="5">
    <location>
        <position position="60"/>
    </location>
</feature>
<comment type="function">
    <text evidence="1 3">Cell wall protein involved in development of asexual structures such as phialide and conidium development, and thus required for spore formation (By similarity). Plays a role as a general stress protectant produced by the fungus in competition with antagonistic bacteria (By similarity).</text>
</comment>
<comment type="subcellular location">
    <subcellularLocation>
        <location evidence="2">Secreted</location>
    </subcellularLocation>
    <subcellularLocation>
        <location evidence="3">Secreted</location>
        <location evidence="3">Cell wall</location>
    </subcellularLocation>
</comment>
<comment type="induction">
    <text evidence="7">Expression is higher at 32 degrees Celsius than at 17 degrees Celsius.</text>
</comment>
<comment type="allergen">
    <text evidence="6 7">Major allergen that causes an allergic reaction in human. Binds to IgE.</text>
</comment>
<comment type="similarity">
    <text evidence="9">Belongs to the phiA family.</text>
</comment>
<sequence>MQIKSFVLAASAAATASAAACQAPTNKYFGIVAIHSGSAVQYQPFSAAKSSIFAGLNSQNASCDRPDEKSATFYIQDGSLYLYAASATPQEIFVDRSGMGQGKIGYTTGAQPAPRNSERQGWAIDSQNHLQFQGKDLIACPNSIDGAWSIWADAGVANPAGNTDCVGIAARVEDVTNPNSCVYTQ</sequence>
<accession>A4FSH5</accession>
<gene>
    <name evidence="3" type="primary">phiA</name>
</gene>
<protein>
    <recommendedName>
        <fullName evidence="9">Cell wall protein phiA</fullName>
    </recommendedName>
    <alternativeName>
        <fullName evidence="9">Major allergen phiA</fullName>
    </alternativeName>
    <alternativeName>
        <fullName evidence="3">Phialide development protein A</fullName>
    </alternativeName>
    <allergenName evidence="8">Asp f 34</allergenName>
</protein>
<dbReference type="EMBL" id="AM496018">
    <property type="protein sequence ID" value="CAM54066.1"/>
    <property type="molecule type" value="mRNA"/>
</dbReference>
<dbReference type="Allergome" id="3672">
    <property type="allergen name" value="Asp f 34"/>
</dbReference>
<dbReference type="Allergome" id="3770">
    <property type="allergen name" value="Asp f 34.0101"/>
</dbReference>
<dbReference type="GlyCosmos" id="A4FSH5">
    <property type="glycosylation" value="1 site, No reported glycans"/>
</dbReference>
<dbReference type="GO" id="GO:0005576">
    <property type="term" value="C:extracellular region"/>
    <property type="evidence" value="ECO:0007669"/>
    <property type="project" value="UniProtKB-SubCell"/>
</dbReference>
<dbReference type="GO" id="GO:0030435">
    <property type="term" value="P:sporulation resulting in formation of a cellular spore"/>
    <property type="evidence" value="ECO:0007669"/>
    <property type="project" value="UniProtKB-KW"/>
</dbReference>
<dbReference type="InterPro" id="IPR052820">
    <property type="entry name" value="PhiA_domain"/>
</dbReference>
<dbReference type="PANTHER" id="PTHR42047">
    <property type="entry name" value="PROTEIN, PUTATIVE (AFU_ORTHOLOGUE AFUA_6G03560)-RELATED"/>
    <property type="match status" value="1"/>
</dbReference>
<dbReference type="PANTHER" id="PTHR42047:SF1">
    <property type="entry name" value="PROTEIN, PUTATIVE (AFU_ORTHOLOGUE AFUA_6G03560)-RELATED"/>
    <property type="match status" value="1"/>
</dbReference>
<organism evidence="10">
    <name type="scientific">Aspergillus fumigatus</name>
    <name type="common">Neosartorya fumigata</name>
    <dbReference type="NCBI Taxonomy" id="746128"/>
    <lineage>
        <taxon>Eukaryota</taxon>
        <taxon>Fungi</taxon>
        <taxon>Dikarya</taxon>
        <taxon>Ascomycota</taxon>
        <taxon>Pezizomycotina</taxon>
        <taxon>Eurotiomycetes</taxon>
        <taxon>Eurotiomycetidae</taxon>
        <taxon>Eurotiales</taxon>
        <taxon>Aspergillaceae</taxon>
        <taxon>Aspergillus</taxon>
        <taxon>Aspergillus subgen. Fumigati</taxon>
    </lineage>
</organism>
<name>PHIA_ASPFM</name>
<proteinExistence type="evidence at protein level"/>